<feature type="initiator methionine" description="Removed" evidence="2">
    <location>
        <position position="1"/>
    </location>
</feature>
<feature type="chain" id="PRO_0000307931" description="SH3KBP1-binding protein 1">
    <location>
        <begin position="2"/>
        <end position="704"/>
    </location>
</feature>
<feature type="domain" description="BTB" evidence="3">
    <location>
        <begin position="19"/>
        <end position="88"/>
    </location>
</feature>
<feature type="repeat" description="WD 1">
    <location>
        <begin position="233"/>
        <end position="280"/>
    </location>
</feature>
<feature type="repeat" description="WD 2">
    <location>
        <begin position="283"/>
        <end position="322"/>
    </location>
</feature>
<feature type="repeat" description="WD 3">
    <location>
        <begin position="324"/>
        <end position="359"/>
    </location>
</feature>
<feature type="repeat" description="WD 4">
    <location>
        <begin position="428"/>
        <end position="466"/>
    </location>
</feature>
<feature type="repeat" description="WD 5">
    <location>
        <begin position="548"/>
        <end position="586"/>
    </location>
</feature>
<feature type="region of interest" description="Disordered" evidence="4">
    <location>
        <begin position="145"/>
        <end position="165"/>
    </location>
</feature>
<feature type="region of interest" description="Disordered" evidence="4">
    <location>
        <begin position="611"/>
        <end position="704"/>
    </location>
</feature>
<feature type="short sequence motif" description="PXXXPR" evidence="5">
    <location>
        <begin position="618"/>
        <end position="623"/>
    </location>
</feature>
<feature type="short sequence motif" description="PXXXPR" evidence="5">
    <location>
        <begin position="678"/>
        <end position="683"/>
    </location>
</feature>
<feature type="compositionally biased region" description="Low complexity" evidence="4">
    <location>
        <begin position="611"/>
        <end position="644"/>
    </location>
</feature>
<feature type="modified residue" description="N-acetylalanine" evidence="2">
    <location>
        <position position="2"/>
    </location>
</feature>
<feature type="modified residue" description="Phosphothreonine" evidence="2">
    <location>
        <position position="163"/>
    </location>
</feature>
<feature type="modified residue" description="Phosphoserine" evidence="2">
    <location>
        <position position="644"/>
    </location>
</feature>
<feature type="modified residue" description="Phosphoserine" evidence="2">
    <location>
        <position position="646"/>
    </location>
</feature>
<sequence>MAAAAPAVDGVPGRGPPGEVIHLNVGGKRFSTSRQTLTWIPDSFFSSLLSGRISTLKDETGAIFIDRDPTVFAPILNFLRTKELDPRGVHGSSLLHEAQFYGLTPLVRRLQLLEELDRSSCGNVLFTGYLPPPVFPVKRRNRHSLVGPQQAGGRPAPVRRSNTMPPNLGNAGLLGRMLDEKSPPSPSGLPEEPGMVRLVCGHHNWIAVAYTQFLVCYRLKEASGWQLVFSSPRLDWPIERLALTARVLGGALGEHDKMVAVATGSEILLWALQPEGGGSEIGVFHLGVPVEALFFVGNQLIATSHTGRIGVWNAVTKHWQVQEVQPITSYDAAGSFLLLGCNNGSIYYVDVQKFPLRMKDNDLLVSELYRDPAEDGVTALSVYLTPKTSDSGNWIEIAYGTSSGGVRVIVQHPETVGSGPQLFQTFTVHRSPVTKIMLSEKHLISVCADSNHVRTWSVTRFRGMISTQPGSTPLASFKILALESADGHGGCSAGNDIGPYGERDDQQVFIQKVVPSASQLFVRLSSTGQRVCSVRSVDGSPTTAFTVLECEGSRRLGSRPRRYLLTGQANGSLAMWDLTTAMDGLGQAPAGGLTEEELMEQLEQCDLAPLASSRGSLPSPSPRTSLTSLHSAFSNTSLSSRRGSPSPPQAEARRRGGGSFVERCQELVRSGPEPRRPPTPAPRPSSGLGAPLVPPKTKLNETSF</sequence>
<protein>
    <recommendedName>
        <fullName>SH3KBP1-binding protein 1</fullName>
    </recommendedName>
</protein>
<reference key="1">
    <citation type="submission" date="2007-02" db="EMBL/GenBank/DDBJ databases">
        <authorList>
            <consortium name="NIH - Mammalian Gene Collection (MGC) project"/>
        </authorList>
    </citation>
    <scope>NUCLEOTIDE SEQUENCE [LARGE SCALE MRNA]</scope>
    <source>
        <strain>Hereford</strain>
        <tissue>Thymus</tissue>
    </source>
</reference>
<evidence type="ECO:0000250" key="1">
    <source>
        <dbReference type="UniProtKB" id="Q6P7W2"/>
    </source>
</evidence>
<evidence type="ECO:0000250" key="2">
    <source>
        <dbReference type="UniProtKB" id="Q8TBC3"/>
    </source>
</evidence>
<evidence type="ECO:0000255" key="3">
    <source>
        <dbReference type="PROSITE-ProRule" id="PRU00037"/>
    </source>
</evidence>
<evidence type="ECO:0000256" key="4">
    <source>
        <dbReference type="SAM" id="MobiDB-lite"/>
    </source>
</evidence>
<evidence type="ECO:0000305" key="5"/>
<name>SHKB1_BOVIN</name>
<accession>A3KMV1</accession>
<dbReference type="EMBL" id="BC133279">
    <property type="protein sequence ID" value="AAI33280.1"/>
    <property type="molecule type" value="mRNA"/>
</dbReference>
<dbReference type="RefSeq" id="NP_001076076.1">
    <property type="nucleotide sequence ID" value="NM_001082607.1"/>
</dbReference>
<dbReference type="SMR" id="A3KMV1"/>
<dbReference type="FunCoup" id="A3KMV1">
    <property type="interactions" value="1822"/>
</dbReference>
<dbReference type="STRING" id="9913.ENSBTAP00000066625"/>
<dbReference type="PaxDb" id="9913-ENSBTAP00000006241"/>
<dbReference type="GeneID" id="512402"/>
<dbReference type="KEGG" id="bta:512402"/>
<dbReference type="CTD" id="92799"/>
<dbReference type="VEuPathDB" id="HostDB:ENSBTAG00000004755"/>
<dbReference type="eggNOG" id="KOG2714">
    <property type="taxonomic scope" value="Eukaryota"/>
</dbReference>
<dbReference type="HOGENOM" id="CLU_012214_0_1_1"/>
<dbReference type="InParanoid" id="A3KMV1"/>
<dbReference type="OMA" id="FRTERLH"/>
<dbReference type="OrthoDB" id="6077599at2759"/>
<dbReference type="TreeFam" id="TF313754"/>
<dbReference type="Proteomes" id="UP000009136">
    <property type="component" value="Chromosome 18"/>
</dbReference>
<dbReference type="Bgee" id="ENSBTAG00000004755">
    <property type="expression patterns" value="Expressed in blood and 105 other cell types or tissues"/>
</dbReference>
<dbReference type="GO" id="GO:0005764">
    <property type="term" value="C:lysosome"/>
    <property type="evidence" value="ECO:0007669"/>
    <property type="project" value="UniProtKB-SubCell"/>
</dbReference>
<dbReference type="GO" id="GO:0045742">
    <property type="term" value="P:positive regulation of epidermal growth factor receptor signaling pathway"/>
    <property type="evidence" value="ECO:0000250"/>
    <property type="project" value="UniProtKB"/>
</dbReference>
<dbReference type="GO" id="GO:0051260">
    <property type="term" value="P:protein homooligomerization"/>
    <property type="evidence" value="ECO:0007669"/>
    <property type="project" value="InterPro"/>
</dbReference>
<dbReference type="CDD" id="cd18393">
    <property type="entry name" value="BTB_POZ_SHKBP1"/>
    <property type="match status" value="1"/>
</dbReference>
<dbReference type="FunFam" id="3.30.710.10:FF:000038">
    <property type="entry name" value="BTB/POZ domain-containing protein KCTD3 isoform X1"/>
    <property type="match status" value="1"/>
</dbReference>
<dbReference type="FunFam" id="2.130.10.10:FF:000439">
    <property type="entry name" value="SH3KBP1 binding protein 1"/>
    <property type="match status" value="1"/>
</dbReference>
<dbReference type="Gene3D" id="3.30.710.10">
    <property type="entry name" value="Potassium Channel Kv1.1, Chain A"/>
    <property type="match status" value="1"/>
</dbReference>
<dbReference type="Gene3D" id="2.130.10.10">
    <property type="entry name" value="YVTN repeat-like/Quinoprotein amine dehydrogenase"/>
    <property type="match status" value="1"/>
</dbReference>
<dbReference type="InterPro" id="IPR000210">
    <property type="entry name" value="BTB/POZ_dom"/>
</dbReference>
<dbReference type="InterPro" id="IPR047876">
    <property type="entry name" value="SHKBP1/KCTD3"/>
</dbReference>
<dbReference type="InterPro" id="IPR047825">
    <property type="entry name" value="SHKBP1_KCTD3_BTB_POZ"/>
</dbReference>
<dbReference type="InterPro" id="IPR011333">
    <property type="entry name" value="SKP1/BTB/POZ_sf"/>
</dbReference>
<dbReference type="InterPro" id="IPR003131">
    <property type="entry name" value="T1-type_BTB"/>
</dbReference>
<dbReference type="InterPro" id="IPR015943">
    <property type="entry name" value="WD40/YVTN_repeat-like_dom_sf"/>
</dbReference>
<dbReference type="InterPro" id="IPR036322">
    <property type="entry name" value="WD40_repeat_dom_sf"/>
</dbReference>
<dbReference type="PANTHER" id="PTHR15859">
    <property type="entry name" value="SETA BINDING PROTEIN 1"/>
    <property type="match status" value="1"/>
</dbReference>
<dbReference type="PANTHER" id="PTHR15859:SF5">
    <property type="entry name" value="SH3KBP1-BINDING PROTEIN 1"/>
    <property type="match status" value="1"/>
</dbReference>
<dbReference type="Pfam" id="PF02214">
    <property type="entry name" value="BTB_2"/>
    <property type="match status" value="1"/>
</dbReference>
<dbReference type="SMART" id="SM00225">
    <property type="entry name" value="BTB"/>
    <property type="match status" value="1"/>
</dbReference>
<dbReference type="SUPFAM" id="SSF54695">
    <property type="entry name" value="POZ domain"/>
    <property type="match status" value="1"/>
</dbReference>
<dbReference type="SUPFAM" id="SSF50978">
    <property type="entry name" value="WD40 repeat-like"/>
    <property type="match status" value="1"/>
</dbReference>
<dbReference type="PROSITE" id="PS50097">
    <property type="entry name" value="BTB"/>
    <property type="match status" value="1"/>
</dbReference>
<dbReference type="PROSITE" id="PS00678">
    <property type="entry name" value="WD_REPEATS_1"/>
    <property type="match status" value="1"/>
</dbReference>
<proteinExistence type="evidence at transcript level"/>
<keyword id="KW-0007">Acetylation</keyword>
<keyword id="KW-0458">Lysosome</keyword>
<keyword id="KW-0597">Phosphoprotein</keyword>
<keyword id="KW-1185">Reference proteome</keyword>
<keyword id="KW-0677">Repeat</keyword>
<keyword id="KW-0853">WD repeat</keyword>
<organism>
    <name type="scientific">Bos taurus</name>
    <name type="common">Bovine</name>
    <dbReference type="NCBI Taxonomy" id="9913"/>
    <lineage>
        <taxon>Eukaryota</taxon>
        <taxon>Metazoa</taxon>
        <taxon>Chordata</taxon>
        <taxon>Craniata</taxon>
        <taxon>Vertebrata</taxon>
        <taxon>Euteleostomi</taxon>
        <taxon>Mammalia</taxon>
        <taxon>Eutheria</taxon>
        <taxon>Laurasiatheria</taxon>
        <taxon>Artiodactyla</taxon>
        <taxon>Ruminantia</taxon>
        <taxon>Pecora</taxon>
        <taxon>Bovidae</taxon>
        <taxon>Bovinae</taxon>
        <taxon>Bos</taxon>
    </lineage>
</organism>
<gene>
    <name type="primary">SHKBP1</name>
</gene>
<comment type="function">
    <text evidence="1">Inhibits CBL-SH3KBP1 complex mediated down-regulation of EGFR signaling by sequestration of SH3KBP1. Binds to SH3KBP1 and prevents its interaction with CBL and inhibits translocation of SH3KBP1 to EGFR containing vesicles upon EGF stimulation.</text>
</comment>
<comment type="subunit">
    <text evidence="1 2">Monomer. Interacts with CUL3; interaction is direct and forms a 5:5 heterodecamer (By similarity). Interacts (via PXXXPR motifs) with SH3KBP1 (via SH3 domains) (By similarity). Directly interacts with cathepsin B/CTSB (By similarity).</text>
</comment>
<comment type="subcellular location">
    <subcellularLocation>
        <location evidence="2">Lysosome</location>
    </subcellularLocation>
</comment>
<comment type="similarity">
    <text evidence="5">Belongs to the KCTD3 family.</text>
</comment>